<proteinExistence type="evidence at protein level"/>
<name>RL37_THEKO</name>
<comment type="function">
    <text evidence="1">Binds to the 23S rRNA.</text>
</comment>
<comment type="cofactor">
    <cofactor evidence="1 4 5 6">
        <name>Zn(2+)</name>
        <dbReference type="ChEBI" id="CHEBI:29105"/>
    </cofactor>
    <text evidence="1 4 5 6">Binds 1 zinc ion per subunit.</text>
</comment>
<comment type="subunit">
    <text evidence="2">Part of the 50S ribosomal subunit.</text>
</comment>
<comment type="similarity">
    <text evidence="1">Belongs to the eukaryotic ribosomal protein eL37 family.</text>
</comment>
<evidence type="ECO:0000255" key="1">
    <source>
        <dbReference type="HAMAP-Rule" id="MF_00547"/>
    </source>
</evidence>
<evidence type="ECO:0000269" key="2">
    <source>
    </source>
</evidence>
<evidence type="ECO:0000305" key="3"/>
<evidence type="ECO:0007744" key="4">
    <source>
        <dbReference type="PDB" id="6SKF"/>
    </source>
</evidence>
<evidence type="ECO:0007744" key="5">
    <source>
        <dbReference type="PDB" id="6SKG"/>
    </source>
</evidence>
<evidence type="ECO:0007744" key="6">
    <source>
        <dbReference type="PDB" id="6TH6"/>
    </source>
</evidence>
<keyword id="KW-0002">3D-structure</keyword>
<keyword id="KW-0479">Metal-binding</keyword>
<keyword id="KW-1185">Reference proteome</keyword>
<keyword id="KW-0687">Ribonucleoprotein</keyword>
<keyword id="KW-0689">Ribosomal protein</keyword>
<keyword id="KW-0694">RNA-binding</keyword>
<keyword id="KW-0699">rRNA-binding</keyword>
<keyword id="KW-0862">Zinc</keyword>
<keyword id="KW-0863">Zinc-finger</keyword>
<accession>Q5JIE1</accession>
<protein>
    <recommendedName>
        <fullName evidence="1">Large ribosomal subunit protein eL37</fullName>
    </recommendedName>
    <alternativeName>
        <fullName evidence="3">50S ribosomal protein L37e</fullName>
    </alternativeName>
</protein>
<sequence length="63" mass="7448">MGAGTAPKGKRNRTPTHIRCRRCGRRAFNVKKGYCAACGFGRSRRMRKYSWSHKWRKKRNLSY</sequence>
<dbReference type="EMBL" id="AP006878">
    <property type="protein sequence ID" value="BAD85164.1"/>
    <property type="molecule type" value="Genomic_DNA"/>
</dbReference>
<dbReference type="RefSeq" id="WP_011249926.1">
    <property type="nucleotide sequence ID" value="NC_006624.1"/>
</dbReference>
<dbReference type="PDB" id="6SKF">
    <property type="method" value="EM"/>
    <property type="resolution" value="2.95 A"/>
    <property type="chains" value="Bh=1-63"/>
</dbReference>
<dbReference type="PDB" id="6SKG">
    <property type="method" value="EM"/>
    <property type="resolution" value="2.65 A"/>
    <property type="chains" value="Bh=1-63"/>
</dbReference>
<dbReference type="PDB" id="6TH6">
    <property type="method" value="EM"/>
    <property type="resolution" value="2.55 A"/>
    <property type="chains" value="Bh=1-63"/>
</dbReference>
<dbReference type="PDBsum" id="6SKF"/>
<dbReference type="PDBsum" id="6SKG"/>
<dbReference type="PDBsum" id="6TH6"/>
<dbReference type="EMDB" id="EMD-10223"/>
<dbReference type="EMDB" id="EMD-10224"/>
<dbReference type="EMDB" id="EMD-10503"/>
<dbReference type="SMR" id="Q5JIE1"/>
<dbReference type="FunCoup" id="Q5JIE1">
    <property type="interactions" value="106"/>
</dbReference>
<dbReference type="STRING" id="69014.TK0975"/>
<dbReference type="EnsemblBacteria" id="BAD85164">
    <property type="protein sequence ID" value="BAD85164"/>
    <property type="gene ID" value="TK0975"/>
</dbReference>
<dbReference type="GeneID" id="78447488"/>
<dbReference type="KEGG" id="tko:TK0975"/>
<dbReference type="PATRIC" id="fig|69014.16.peg.953"/>
<dbReference type="eggNOG" id="arCOG04126">
    <property type="taxonomic scope" value="Archaea"/>
</dbReference>
<dbReference type="HOGENOM" id="CLU_208825_0_0_2"/>
<dbReference type="InParanoid" id="Q5JIE1"/>
<dbReference type="OrthoDB" id="5619at2157"/>
<dbReference type="PhylomeDB" id="Q5JIE1"/>
<dbReference type="Proteomes" id="UP000000536">
    <property type="component" value="Chromosome"/>
</dbReference>
<dbReference type="GO" id="GO:0022625">
    <property type="term" value="C:cytosolic large ribosomal subunit"/>
    <property type="evidence" value="ECO:0000318"/>
    <property type="project" value="GO_Central"/>
</dbReference>
<dbReference type="GO" id="GO:0003723">
    <property type="term" value="F:RNA binding"/>
    <property type="evidence" value="ECO:0000318"/>
    <property type="project" value="GO_Central"/>
</dbReference>
<dbReference type="GO" id="GO:0019843">
    <property type="term" value="F:rRNA binding"/>
    <property type="evidence" value="ECO:0007669"/>
    <property type="project" value="UniProtKB-KW"/>
</dbReference>
<dbReference type="GO" id="GO:0003735">
    <property type="term" value="F:structural constituent of ribosome"/>
    <property type="evidence" value="ECO:0007669"/>
    <property type="project" value="InterPro"/>
</dbReference>
<dbReference type="GO" id="GO:0008270">
    <property type="term" value="F:zinc ion binding"/>
    <property type="evidence" value="ECO:0007669"/>
    <property type="project" value="UniProtKB-UniRule"/>
</dbReference>
<dbReference type="GO" id="GO:0006412">
    <property type="term" value="P:translation"/>
    <property type="evidence" value="ECO:0007669"/>
    <property type="project" value="UniProtKB-UniRule"/>
</dbReference>
<dbReference type="FunFam" id="2.20.25.30:FF:000003">
    <property type="entry name" value="50S ribosomal protein L37e"/>
    <property type="match status" value="1"/>
</dbReference>
<dbReference type="Gene3D" id="2.20.25.30">
    <property type="match status" value="1"/>
</dbReference>
<dbReference type="HAMAP" id="MF_00547">
    <property type="entry name" value="Ribosomal_eL37"/>
    <property type="match status" value="1"/>
</dbReference>
<dbReference type="InterPro" id="IPR001569">
    <property type="entry name" value="Ribosomal_eL37"/>
</dbReference>
<dbReference type="InterPro" id="IPR011331">
    <property type="entry name" value="Ribosomal_eL37/eL43"/>
</dbReference>
<dbReference type="InterPro" id="IPR018267">
    <property type="entry name" value="Ribosomal_eL37_CS"/>
</dbReference>
<dbReference type="InterPro" id="IPR011332">
    <property type="entry name" value="Ribosomal_zn-bd"/>
</dbReference>
<dbReference type="NCBIfam" id="NF003214">
    <property type="entry name" value="PRK04179.1"/>
    <property type="match status" value="1"/>
</dbReference>
<dbReference type="PANTHER" id="PTHR10768">
    <property type="entry name" value="60S RIBOSOMAL PROTEIN L37"/>
    <property type="match status" value="1"/>
</dbReference>
<dbReference type="PANTHER" id="PTHR10768:SF0">
    <property type="entry name" value="RIBOSOMAL PROTEIN L37"/>
    <property type="match status" value="1"/>
</dbReference>
<dbReference type="Pfam" id="PF01907">
    <property type="entry name" value="Ribosomal_L37e"/>
    <property type="match status" value="1"/>
</dbReference>
<dbReference type="SUPFAM" id="SSF57829">
    <property type="entry name" value="Zn-binding ribosomal proteins"/>
    <property type="match status" value="1"/>
</dbReference>
<dbReference type="PROSITE" id="PS01077">
    <property type="entry name" value="RIBOSOMAL_L37E"/>
    <property type="match status" value="1"/>
</dbReference>
<feature type="chain" id="PRO_0000139737" description="Large ribosomal subunit protein eL37">
    <location>
        <begin position="1"/>
        <end position="63"/>
    </location>
</feature>
<feature type="zinc finger region" description="C4-type" evidence="1">
    <location>
        <begin position="20"/>
        <end position="38"/>
    </location>
</feature>
<feature type="binding site" evidence="1 4 5 6">
    <location>
        <position position="20"/>
    </location>
    <ligand>
        <name>Zn(2+)</name>
        <dbReference type="ChEBI" id="CHEBI:29105"/>
    </ligand>
</feature>
<feature type="binding site" evidence="1 4 6">
    <location>
        <position position="23"/>
    </location>
    <ligand>
        <name>Zn(2+)</name>
        <dbReference type="ChEBI" id="CHEBI:29105"/>
    </ligand>
</feature>
<feature type="binding site" evidence="1 4 5">
    <location>
        <position position="35"/>
    </location>
    <ligand>
        <name>Zn(2+)</name>
        <dbReference type="ChEBI" id="CHEBI:29105"/>
    </ligand>
</feature>
<feature type="binding site" evidence="1 4 5 6">
    <location>
        <position position="38"/>
    </location>
    <ligand>
        <name>Zn(2+)</name>
        <dbReference type="ChEBI" id="CHEBI:29105"/>
    </ligand>
</feature>
<reference key="1">
    <citation type="journal article" date="2005" name="Genome Res.">
        <title>Complete genome sequence of the hyperthermophilic archaeon Thermococcus kodakaraensis KOD1 and comparison with Pyrococcus genomes.</title>
        <authorList>
            <person name="Fukui T."/>
            <person name="Atomi H."/>
            <person name="Kanai T."/>
            <person name="Matsumi R."/>
            <person name="Fujiwara S."/>
            <person name="Imanaka T."/>
        </authorList>
    </citation>
    <scope>NUCLEOTIDE SEQUENCE [LARGE SCALE GENOMIC DNA]</scope>
    <source>
        <strain>ATCC BAA-918 / JCM 12380 / KOD1</strain>
    </source>
</reference>
<reference evidence="4 5 6" key="2">
    <citation type="journal article" date="2020" name="Nature">
        <title>Dynamic RNA acetylation revealed by quantitative cross-evolutionary mapping.</title>
        <authorList>
            <person name="Sas-Chen A."/>
            <person name="Thomas J.M."/>
            <person name="Matzov D."/>
            <person name="Taoka M."/>
            <person name="Nance K.D."/>
            <person name="Nir R."/>
            <person name="Bryson K.M."/>
            <person name="Shachar R."/>
            <person name="Liman G.L.S."/>
            <person name="Burkhart B.W."/>
            <person name="Gamage S.T."/>
            <person name="Nobe Y."/>
            <person name="Briney C.A."/>
            <person name="Levy M.J."/>
            <person name="Fuchs R.T."/>
            <person name="Robb G.B."/>
            <person name="Hartmann J."/>
            <person name="Sharma S."/>
            <person name="Lin Q."/>
            <person name="Florens L."/>
            <person name="Washburn M.P."/>
            <person name="Isobe T."/>
            <person name="Santangelo T.J."/>
            <person name="Shalev-Benami M."/>
            <person name="Meier J.L."/>
            <person name="Schwartz S."/>
        </authorList>
    </citation>
    <scope>STRUCTURE BY ELECTRON MICROSCOPY (2.55 ANGSTROMS) IN 70S RIBOSOME IN C0MPLEX WITH ZN(2+)</scope>
    <scope>SUBUNIT</scope>
    <source>
        <strain>ATCC BAA-918 / TS559</strain>
    </source>
</reference>
<gene>
    <name evidence="1" type="primary">rpl37e</name>
    <name type="ordered locus">TK0975</name>
</gene>
<organism>
    <name type="scientific">Thermococcus kodakarensis (strain ATCC BAA-918 / JCM 12380 / KOD1)</name>
    <name type="common">Pyrococcus kodakaraensis (strain KOD1)</name>
    <dbReference type="NCBI Taxonomy" id="69014"/>
    <lineage>
        <taxon>Archaea</taxon>
        <taxon>Methanobacteriati</taxon>
        <taxon>Methanobacteriota</taxon>
        <taxon>Thermococci</taxon>
        <taxon>Thermococcales</taxon>
        <taxon>Thermococcaceae</taxon>
        <taxon>Thermococcus</taxon>
    </lineage>
</organism>